<keyword id="KW-0067">ATP-binding</keyword>
<keyword id="KW-0520">NAD</keyword>
<keyword id="KW-0547">Nucleotide-binding</keyword>
<keyword id="KW-0548">Nucleotidyltransferase</keyword>
<keyword id="KW-0662">Pyridine nucleotide biosynthesis</keyword>
<keyword id="KW-1185">Reference proteome</keyword>
<keyword id="KW-0808">Transferase</keyword>
<evidence type="ECO:0000255" key="1">
    <source>
        <dbReference type="HAMAP-Rule" id="MF_00244"/>
    </source>
</evidence>
<protein>
    <recommendedName>
        <fullName evidence="1">Probable nicotinate-nucleotide adenylyltransferase</fullName>
        <ecNumber evidence="1">2.7.7.18</ecNumber>
    </recommendedName>
    <alternativeName>
        <fullName evidence="1">Deamido-NAD(+) diphosphorylase</fullName>
    </alternativeName>
    <alternativeName>
        <fullName evidence="1">Deamido-NAD(+) pyrophosphorylase</fullName>
    </alternativeName>
    <alternativeName>
        <fullName evidence="1">Nicotinate mononucleotide adenylyltransferase</fullName>
        <shortName evidence="1">NaMN adenylyltransferase</shortName>
    </alternativeName>
</protein>
<proteinExistence type="inferred from homology"/>
<feature type="chain" id="PRO_0000336698" description="Probable nicotinate-nucleotide adenylyltransferase">
    <location>
        <begin position="1"/>
        <end position="219"/>
    </location>
</feature>
<organism>
    <name type="scientific">Herminiimonas arsenicoxydans</name>
    <dbReference type="NCBI Taxonomy" id="204773"/>
    <lineage>
        <taxon>Bacteria</taxon>
        <taxon>Pseudomonadati</taxon>
        <taxon>Pseudomonadota</taxon>
        <taxon>Betaproteobacteria</taxon>
        <taxon>Burkholderiales</taxon>
        <taxon>Oxalobacteraceae</taxon>
        <taxon>Herminiimonas</taxon>
    </lineage>
</organism>
<name>NADD_HERAR</name>
<gene>
    <name evidence="1" type="primary">nadD</name>
    <name type="ordered locus">HEAR0555</name>
</gene>
<dbReference type="EC" id="2.7.7.18" evidence="1"/>
<dbReference type="EMBL" id="CU207211">
    <property type="protein sequence ID" value="CAL60761.1"/>
    <property type="molecule type" value="Genomic_DNA"/>
</dbReference>
<dbReference type="SMR" id="A4G2M4"/>
<dbReference type="STRING" id="204773.HEAR0555"/>
<dbReference type="KEGG" id="har:HEAR0555"/>
<dbReference type="eggNOG" id="COG1057">
    <property type="taxonomic scope" value="Bacteria"/>
</dbReference>
<dbReference type="HOGENOM" id="CLU_069765_0_0_4"/>
<dbReference type="OrthoDB" id="5295945at2"/>
<dbReference type="UniPathway" id="UPA00253">
    <property type="reaction ID" value="UER00332"/>
</dbReference>
<dbReference type="Proteomes" id="UP000006697">
    <property type="component" value="Chromosome"/>
</dbReference>
<dbReference type="GO" id="GO:0005524">
    <property type="term" value="F:ATP binding"/>
    <property type="evidence" value="ECO:0007669"/>
    <property type="project" value="UniProtKB-KW"/>
</dbReference>
<dbReference type="GO" id="GO:0004515">
    <property type="term" value="F:nicotinate-nucleotide adenylyltransferase activity"/>
    <property type="evidence" value="ECO:0007669"/>
    <property type="project" value="UniProtKB-UniRule"/>
</dbReference>
<dbReference type="GO" id="GO:0009435">
    <property type="term" value="P:NAD biosynthetic process"/>
    <property type="evidence" value="ECO:0007669"/>
    <property type="project" value="UniProtKB-UniRule"/>
</dbReference>
<dbReference type="CDD" id="cd02165">
    <property type="entry name" value="NMNAT"/>
    <property type="match status" value="1"/>
</dbReference>
<dbReference type="Gene3D" id="3.40.50.620">
    <property type="entry name" value="HUPs"/>
    <property type="match status" value="1"/>
</dbReference>
<dbReference type="HAMAP" id="MF_00244">
    <property type="entry name" value="NaMN_adenylyltr"/>
    <property type="match status" value="1"/>
</dbReference>
<dbReference type="InterPro" id="IPR004821">
    <property type="entry name" value="Cyt_trans-like"/>
</dbReference>
<dbReference type="InterPro" id="IPR005248">
    <property type="entry name" value="NadD/NMNAT"/>
</dbReference>
<dbReference type="InterPro" id="IPR014729">
    <property type="entry name" value="Rossmann-like_a/b/a_fold"/>
</dbReference>
<dbReference type="NCBIfam" id="TIGR00482">
    <property type="entry name" value="nicotinate (nicotinamide) nucleotide adenylyltransferase"/>
    <property type="match status" value="1"/>
</dbReference>
<dbReference type="NCBIfam" id="NF005410">
    <property type="entry name" value="PRK06973.1"/>
    <property type="match status" value="1"/>
</dbReference>
<dbReference type="PANTHER" id="PTHR39321">
    <property type="entry name" value="NICOTINATE-NUCLEOTIDE ADENYLYLTRANSFERASE-RELATED"/>
    <property type="match status" value="1"/>
</dbReference>
<dbReference type="PANTHER" id="PTHR39321:SF3">
    <property type="entry name" value="PHOSPHOPANTETHEINE ADENYLYLTRANSFERASE"/>
    <property type="match status" value="1"/>
</dbReference>
<dbReference type="Pfam" id="PF01467">
    <property type="entry name" value="CTP_transf_like"/>
    <property type="match status" value="1"/>
</dbReference>
<dbReference type="SUPFAM" id="SSF52374">
    <property type="entry name" value="Nucleotidylyl transferase"/>
    <property type="match status" value="1"/>
</dbReference>
<sequence length="219" mass="24319">MKSVTRCIALLGGSFDPVHNGHVALADYFVALLKPDELRVIPAGNPWQKHGLQASGQDRMAMVRSAFSTQKVTVNIDQQEILRPSATYTIDTLRAIRQELGPHASIVFLMGADQLQHLNTWQEWQHMFDYAHICAASRPGFAMDAAHIPTEVAQEFTRRTGTPEQIRTTPQGLAYLAPNLAVDISATAIRAALQRGERPTSQLPLGVLDYIEQHHLYKS</sequence>
<comment type="function">
    <text evidence="1">Catalyzes the reversible adenylation of nicotinate mononucleotide (NaMN) to nicotinic acid adenine dinucleotide (NaAD).</text>
</comment>
<comment type="catalytic activity">
    <reaction evidence="1">
        <text>nicotinate beta-D-ribonucleotide + ATP + H(+) = deamido-NAD(+) + diphosphate</text>
        <dbReference type="Rhea" id="RHEA:22860"/>
        <dbReference type="ChEBI" id="CHEBI:15378"/>
        <dbReference type="ChEBI" id="CHEBI:30616"/>
        <dbReference type="ChEBI" id="CHEBI:33019"/>
        <dbReference type="ChEBI" id="CHEBI:57502"/>
        <dbReference type="ChEBI" id="CHEBI:58437"/>
        <dbReference type="EC" id="2.7.7.18"/>
    </reaction>
</comment>
<comment type="pathway">
    <text evidence="1">Cofactor biosynthesis; NAD(+) biosynthesis; deamido-NAD(+) from nicotinate D-ribonucleotide: step 1/1.</text>
</comment>
<comment type="similarity">
    <text evidence="1">Belongs to the NadD family.</text>
</comment>
<accession>A4G2M4</accession>
<reference key="1">
    <citation type="journal article" date="2007" name="PLoS Genet.">
        <title>A tale of two oxidation states: bacterial colonization of arsenic-rich environments.</title>
        <authorList>
            <person name="Muller D."/>
            <person name="Medigue C."/>
            <person name="Koechler S."/>
            <person name="Barbe V."/>
            <person name="Barakat M."/>
            <person name="Talla E."/>
            <person name="Bonnefoy V."/>
            <person name="Krin E."/>
            <person name="Arsene-Ploetze F."/>
            <person name="Carapito C."/>
            <person name="Chandler M."/>
            <person name="Cournoyer B."/>
            <person name="Cruveiller S."/>
            <person name="Dossat C."/>
            <person name="Duval S."/>
            <person name="Heymann M."/>
            <person name="Leize E."/>
            <person name="Lieutaud A."/>
            <person name="Lievremont D."/>
            <person name="Makita Y."/>
            <person name="Mangenot S."/>
            <person name="Nitschke W."/>
            <person name="Ortet P."/>
            <person name="Perdrial N."/>
            <person name="Schoepp B."/>
            <person name="Siguier P."/>
            <person name="Simeonova D.D."/>
            <person name="Rouy Z."/>
            <person name="Segurens B."/>
            <person name="Turlin E."/>
            <person name="Vallenet D."/>
            <person name="van Dorsselaer A."/>
            <person name="Weiss S."/>
            <person name="Weissenbach J."/>
            <person name="Lett M.-C."/>
            <person name="Danchin A."/>
            <person name="Bertin P.N."/>
        </authorList>
    </citation>
    <scope>NUCLEOTIDE SEQUENCE [LARGE SCALE GENOMIC DNA]</scope>
    <source>
        <strain>ULPAs1</strain>
    </source>
</reference>